<dbReference type="EC" id="1.-.-.-"/>
<dbReference type="EMBL" id="AE005174">
    <property type="protein sequence ID" value="AAG56751.1"/>
    <property type="molecule type" value="Genomic_DNA"/>
</dbReference>
<dbReference type="EMBL" id="BA000007">
    <property type="protein sequence ID" value="BAB35894.1"/>
    <property type="molecule type" value="Genomic_DNA"/>
</dbReference>
<dbReference type="PIR" id="C85786">
    <property type="entry name" value="C85786"/>
</dbReference>
<dbReference type="PIR" id="G90937">
    <property type="entry name" value="G90937"/>
</dbReference>
<dbReference type="RefSeq" id="NP_310498.1">
    <property type="nucleotide sequence ID" value="NC_002695.1"/>
</dbReference>
<dbReference type="RefSeq" id="WP_000339283.1">
    <property type="nucleotide sequence ID" value="NZ_VOAI01000007.1"/>
</dbReference>
<dbReference type="SMR" id="P0ACY2"/>
<dbReference type="STRING" id="155864.Z2798"/>
<dbReference type="GeneID" id="916910"/>
<dbReference type="KEGG" id="ece:Z2798"/>
<dbReference type="KEGG" id="ecs:ECs_2471"/>
<dbReference type="PATRIC" id="fig|386585.9.peg.2586"/>
<dbReference type="eggNOG" id="COG0778">
    <property type="taxonomic scope" value="Bacteria"/>
</dbReference>
<dbReference type="HOGENOM" id="CLU_070764_5_0_6"/>
<dbReference type="OMA" id="LTEWFAY"/>
<dbReference type="Proteomes" id="UP000000558">
    <property type="component" value="Chromosome"/>
</dbReference>
<dbReference type="Proteomes" id="UP000002519">
    <property type="component" value="Chromosome"/>
</dbReference>
<dbReference type="GO" id="GO:0016491">
    <property type="term" value="F:oxidoreductase activity"/>
    <property type="evidence" value="ECO:0007669"/>
    <property type="project" value="UniProtKB-KW"/>
</dbReference>
<dbReference type="CDD" id="cd02135">
    <property type="entry name" value="YdjA-like"/>
    <property type="match status" value="1"/>
</dbReference>
<dbReference type="FunFam" id="3.40.109.10:FF:000005">
    <property type="entry name" value="NAD(P)H nitroreductase"/>
    <property type="match status" value="1"/>
</dbReference>
<dbReference type="Gene3D" id="3.40.109.10">
    <property type="entry name" value="NADH Oxidase"/>
    <property type="match status" value="1"/>
</dbReference>
<dbReference type="InterPro" id="IPR052530">
    <property type="entry name" value="NAD(P)H_nitroreductase"/>
</dbReference>
<dbReference type="InterPro" id="IPR029479">
    <property type="entry name" value="Nitroreductase"/>
</dbReference>
<dbReference type="InterPro" id="IPR000415">
    <property type="entry name" value="Nitroreductase-like"/>
</dbReference>
<dbReference type="InterPro" id="IPR026021">
    <property type="entry name" value="YdjA-like"/>
</dbReference>
<dbReference type="NCBIfam" id="NF008088">
    <property type="entry name" value="PRK10828.1"/>
    <property type="match status" value="1"/>
</dbReference>
<dbReference type="PANTHER" id="PTHR43821">
    <property type="entry name" value="NAD(P)H NITROREDUCTASE YDJA-RELATED"/>
    <property type="match status" value="1"/>
</dbReference>
<dbReference type="PANTHER" id="PTHR43821:SF1">
    <property type="entry name" value="NAD(P)H NITROREDUCTASE YDJA-RELATED"/>
    <property type="match status" value="1"/>
</dbReference>
<dbReference type="Pfam" id="PF00881">
    <property type="entry name" value="Nitroreductase"/>
    <property type="match status" value="1"/>
</dbReference>
<dbReference type="PIRSF" id="PIRSF000232">
    <property type="entry name" value="YdjA"/>
    <property type="match status" value="1"/>
</dbReference>
<dbReference type="SUPFAM" id="SSF55469">
    <property type="entry name" value="FMN-dependent nitroreductase-like"/>
    <property type="match status" value="1"/>
</dbReference>
<comment type="cofactor">
    <cofactor evidence="1">
        <name>FMN</name>
        <dbReference type="ChEBI" id="CHEBI:58210"/>
    </cofactor>
    <text evidence="1">Binds 1 FMN per subunit.</text>
</comment>
<comment type="subunit">
    <text evidence="1">Homodimer.</text>
</comment>
<comment type="similarity">
    <text evidence="3">Belongs to the nitroreductase family.</text>
</comment>
<gene>
    <name type="primary">ydjA</name>
    <name type="ordered locus">Z2798</name>
    <name type="ordered locus">ECs2471</name>
</gene>
<accession>P0ACY2</accession>
<accession>P24250</accession>
<feature type="chain" id="PRO_0000169003" description="Putative NAD(P)H nitroreductase YdjA">
    <location>
        <begin position="1"/>
        <end position="183"/>
    </location>
</feature>
<feature type="binding site" description="in other chain" evidence="1">
    <location>
        <begin position="10"/>
        <end position="12"/>
    </location>
    <ligand>
        <name>FMN</name>
        <dbReference type="ChEBI" id="CHEBI:58210"/>
        <note>ligand shared between dimeric partners</note>
    </ligand>
</feature>
<feature type="binding site" evidence="1">
    <location>
        <position position="35"/>
    </location>
    <ligand>
        <name>FMN</name>
        <dbReference type="ChEBI" id="CHEBI:58210"/>
        <note>ligand shared between dimeric partners</note>
    </ligand>
</feature>
<feature type="binding site" evidence="1">
    <location>
        <position position="39"/>
    </location>
    <ligand>
        <name>FMN</name>
        <dbReference type="ChEBI" id="CHEBI:58210"/>
        <note>ligand shared between dimeric partners</note>
    </ligand>
</feature>
<feature type="binding site" evidence="2">
    <location>
        <begin position="121"/>
        <end position="126"/>
    </location>
    <ligand>
        <name>NAD(+)</name>
        <dbReference type="ChEBI" id="CHEBI:57540"/>
    </ligand>
</feature>
<feature type="binding site" description="in other chain" evidence="1">
    <location>
        <begin position="131"/>
        <end position="133"/>
    </location>
    <ligand>
        <name>FMN</name>
        <dbReference type="ChEBI" id="CHEBI:58210"/>
        <note>ligand shared between dimeric partners</note>
    </ligand>
</feature>
<sequence>MDALELLINRRSASRLAEPAPTGEQLQNILRAGMRAPDHKSMQPWHFFVIEGEGRERFSAVLEQGAIAAGSDDKAIDKARNAPFRAPLIITVVAKCEENHKVPRWEQEMSAGCAVMAMQMAAVAQGFGGIWRSGALTESPVVREAFGCREQDKIVGFLYLGTPQLKASTSINVPDPTPFVTYF</sequence>
<name>YDJA_ECO57</name>
<organism>
    <name type="scientific">Escherichia coli O157:H7</name>
    <dbReference type="NCBI Taxonomy" id="83334"/>
    <lineage>
        <taxon>Bacteria</taxon>
        <taxon>Pseudomonadati</taxon>
        <taxon>Pseudomonadota</taxon>
        <taxon>Gammaproteobacteria</taxon>
        <taxon>Enterobacterales</taxon>
        <taxon>Enterobacteriaceae</taxon>
        <taxon>Escherichia</taxon>
    </lineage>
</organism>
<proteinExistence type="inferred from homology"/>
<evidence type="ECO:0000250" key="1"/>
<evidence type="ECO:0000255" key="2"/>
<evidence type="ECO:0000305" key="3"/>
<keyword id="KW-0285">Flavoprotein</keyword>
<keyword id="KW-0288">FMN</keyword>
<keyword id="KW-0520">NAD</keyword>
<keyword id="KW-0521">NADP</keyword>
<keyword id="KW-0560">Oxidoreductase</keyword>
<keyword id="KW-1185">Reference proteome</keyword>
<reference key="1">
    <citation type="journal article" date="2001" name="Nature">
        <title>Genome sequence of enterohaemorrhagic Escherichia coli O157:H7.</title>
        <authorList>
            <person name="Perna N.T."/>
            <person name="Plunkett G. III"/>
            <person name="Burland V."/>
            <person name="Mau B."/>
            <person name="Glasner J.D."/>
            <person name="Rose D.J."/>
            <person name="Mayhew G.F."/>
            <person name="Evans P.S."/>
            <person name="Gregor J."/>
            <person name="Kirkpatrick H.A."/>
            <person name="Posfai G."/>
            <person name="Hackett J."/>
            <person name="Klink S."/>
            <person name="Boutin A."/>
            <person name="Shao Y."/>
            <person name="Miller L."/>
            <person name="Grotbeck E.J."/>
            <person name="Davis N.W."/>
            <person name="Lim A."/>
            <person name="Dimalanta E.T."/>
            <person name="Potamousis K."/>
            <person name="Apodaca J."/>
            <person name="Anantharaman T.S."/>
            <person name="Lin J."/>
            <person name="Yen G."/>
            <person name="Schwartz D.C."/>
            <person name="Welch R.A."/>
            <person name="Blattner F.R."/>
        </authorList>
    </citation>
    <scope>NUCLEOTIDE SEQUENCE [LARGE SCALE GENOMIC DNA]</scope>
    <source>
        <strain>O157:H7 / EDL933 / ATCC 700927 / EHEC</strain>
    </source>
</reference>
<reference key="2">
    <citation type="journal article" date="2001" name="DNA Res.">
        <title>Complete genome sequence of enterohemorrhagic Escherichia coli O157:H7 and genomic comparison with a laboratory strain K-12.</title>
        <authorList>
            <person name="Hayashi T."/>
            <person name="Makino K."/>
            <person name="Ohnishi M."/>
            <person name="Kurokawa K."/>
            <person name="Ishii K."/>
            <person name="Yokoyama K."/>
            <person name="Han C.-G."/>
            <person name="Ohtsubo E."/>
            <person name="Nakayama K."/>
            <person name="Murata T."/>
            <person name="Tanaka M."/>
            <person name="Tobe T."/>
            <person name="Iida T."/>
            <person name="Takami H."/>
            <person name="Honda T."/>
            <person name="Sasakawa C."/>
            <person name="Ogasawara N."/>
            <person name="Yasunaga T."/>
            <person name="Kuhara S."/>
            <person name="Shiba T."/>
            <person name="Hattori M."/>
            <person name="Shinagawa H."/>
        </authorList>
    </citation>
    <scope>NUCLEOTIDE SEQUENCE [LARGE SCALE GENOMIC DNA]</scope>
    <source>
        <strain>O157:H7 / Sakai / RIMD 0509952 / EHEC</strain>
    </source>
</reference>
<protein>
    <recommendedName>
        <fullName>Putative NAD(P)H nitroreductase YdjA</fullName>
        <ecNumber>1.-.-.-</ecNumber>
    </recommendedName>
</protein>